<feature type="initiator methionine" description="Removed" evidence="5">
    <location>
        <position position="1"/>
    </location>
</feature>
<feature type="chain" id="PRO_0000053061" description="Hemoglobin subunit beta-1">
    <location>
        <begin position="2"/>
        <end position="147"/>
    </location>
</feature>
<feature type="domain" description="Globin" evidence="4">
    <location>
        <begin position="3"/>
        <end position="147"/>
    </location>
</feature>
<feature type="binding site" description="distal binding residue">
    <location>
        <position position="64"/>
    </location>
    <ligand>
        <name>heme b</name>
        <dbReference type="ChEBI" id="CHEBI:60344"/>
    </ligand>
    <ligandPart>
        <name>Fe</name>
        <dbReference type="ChEBI" id="CHEBI:18248"/>
    </ligandPart>
</feature>
<feature type="binding site" description="proximal binding residue">
    <location>
        <position position="93"/>
    </location>
    <ligand>
        <name>heme b</name>
        <dbReference type="ChEBI" id="CHEBI:60344"/>
    </ligand>
    <ligandPart>
        <name>Fe</name>
        <dbReference type="ChEBI" id="CHEBI:18248"/>
    </ligandPart>
</feature>
<feature type="modified residue" description="N-acetylserine" evidence="5">
    <location>
        <position position="2"/>
    </location>
</feature>
<feature type="modified residue" description="N6-succinyllysine" evidence="1">
    <location>
        <position position="18"/>
    </location>
</feature>
<feature type="modified residue" description="Phosphoserine" evidence="3">
    <location>
        <position position="45"/>
    </location>
</feature>
<feature type="modified residue" description="Phosphoserine" evidence="3">
    <location>
        <position position="51"/>
    </location>
</feature>
<feature type="modified residue" description="N6-succinyllysine" evidence="2">
    <location>
        <position position="60"/>
    </location>
</feature>
<feature type="modified residue" description="Asymmetric dimethylarginine" evidence="2">
    <location>
        <position position="105"/>
    </location>
</feature>
<evidence type="ECO:0000250" key="1">
    <source>
        <dbReference type="UniProtKB" id="P02088"/>
    </source>
</evidence>
<evidence type="ECO:0000250" key="2">
    <source>
        <dbReference type="UniProtKB" id="P02089"/>
    </source>
</evidence>
<evidence type="ECO:0000250" key="3">
    <source>
        <dbReference type="UniProtKB" id="P02091"/>
    </source>
</evidence>
<evidence type="ECO:0000255" key="4">
    <source>
        <dbReference type="PROSITE-ProRule" id="PRU00238"/>
    </source>
</evidence>
<evidence type="ECO:0000269" key="5">
    <source>
    </source>
</evidence>
<protein>
    <recommendedName>
        <fullName>Hemoglobin subunit beta-1</fullName>
    </recommendedName>
    <alternativeName>
        <fullName>Beta-1-globin</fullName>
    </alternativeName>
    <alternativeName>
        <fullName>Hemoglobin beta-1 chain</fullName>
    </alternativeName>
</protein>
<organism>
    <name type="scientific">Panthera tigris sumatrae</name>
    <name type="common">Sumatran tiger</name>
    <name type="synonym">Panthera sumatrae</name>
    <dbReference type="NCBI Taxonomy" id="9695"/>
    <lineage>
        <taxon>Eukaryota</taxon>
        <taxon>Metazoa</taxon>
        <taxon>Chordata</taxon>
        <taxon>Craniata</taxon>
        <taxon>Vertebrata</taxon>
        <taxon>Euteleostomi</taxon>
        <taxon>Mammalia</taxon>
        <taxon>Eutheria</taxon>
        <taxon>Laurasiatheria</taxon>
        <taxon>Carnivora</taxon>
        <taxon>Feliformia</taxon>
        <taxon>Felidae</taxon>
        <taxon>Pantherinae</taxon>
        <taxon>Panthera</taxon>
    </lineage>
</organism>
<proteinExistence type="evidence at protein level"/>
<keyword id="KW-0007">Acetylation</keyword>
<keyword id="KW-0903">Direct protein sequencing</keyword>
<keyword id="KW-0349">Heme</keyword>
<keyword id="KW-0408">Iron</keyword>
<keyword id="KW-0479">Metal-binding</keyword>
<keyword id="KW-0488">Methylation</keyword>
<keyword id="KW-0561">Oxygen transport</keyword>
<keyword id="KW-0597">Phosphoprotein</keyword>
<keyword id="KW-0813">Transport</keyword>
<name>HBB1_PANTS</name>
<gene>
    <name type="primary">HBB1</name>
</gene>
<dbReference type="PIR" id="S02079">
    <property type="entry name" value="HBTX1"/>
</dbReference>
<dbReference type="SMR" id="P68048"/>
<dbReference type="iPTMnet" id="P68048"/>
<dbReference type="GO" id="GO:0072562">
    <property type="term" value="C:blood microparticle"/>
    <property type="evidence" value="ECO:0007669"/>
    <property type="project" value="TreeGrafter"/>
</dbReference>
<dbReference type="GO" id="GO:0031838">
    <property type="term" value="C:haptoglobin-hemoglobin complex"/>
    <property type="evidence" value="ECO:0007669"/>
    <property type="project" value="TreeGrafter"/>
</dbReference>
<dbReference type="GO" id="GO:0005833">
    <property type="term" value="C:hemoglobin complex"/>
    <property type="evidence" value="ECO:0007669"/>
    <property type="project" value="InterPro"/>
</dbReference>
<dbReference type="GO" id="GO:0031720">
    <property type="term" value="F:haptoglobin binding"/>
    <property type="evidence" value="ECO:0007669"/>
    <property type="project" value="TreeGrafter"/>
</dbReference>
<dbReference type="GO" id="GO:0020037">
    <property type="term" value="F:heme binding"/>
    <property type="evidence" value="ECO:0007669"/>
    <property type="project" value="InterPro"/>
</dbReference>
<dbReference type="GO" id="GO:0031721">
    <property type="term" value="F:hemoglobin alpha binding"/>
    <property type="evidence" value="ECO:0007669"/>
    <property type="project" value="TreeGrafter"/>
</dbReference>
<dbReference type="GO" id="GO:0046872">
    <property type="term" value="F:metal ion binding"/>
    <property type="evidence" value="ECO:0007669"/>
    <property type="project" value="UniProtKB-KW"/>
</dbReference>
<dbReference type="GO" id="GO:0043177">
    <property type="term" value="F:organic acid binding"/>
    <property type="evidence" value="ECO:0007669"/>
    <property type="project" value="TreeGrafter"/>
</dbReference>
<dbReference type="GO" id="GO:0019825">
    <property type="term" value="F:oxygen binding"/>
    <property type="evidence" value="ECO:0007669"/>
    <property type="project" value="InterPro"/>
</dbReference>
<dbReference type="GO" id="GO:0005344">
    <property type="term" value="F:oxygen carrier activity"/>
    <property type="evidence" value="ECO:0007669"/>
    <property type="project" value="UniProtKB-KW"/>
</dbReference>
<dbReference type="GO" id="GO:0004601">
    <property type="term" value="F:peroxidase activity"/>
    <property type="evidence" value="ECO:0007669"/>
    <property type="project" value="TreeGrafter"/>
</dbReference>
<dbReference type="GO" id="GO:0042744">
    <property type="term" value="P:hydrogen peroxide catabolic process"/>
    <property type="evidence" value="ECO:0007669"/>
    <property type="project" value="TreeGrafter"/>
</dbReference>
<dbReference type="CDD" id="cd08925">
    <property type="entry name" value="Hb-beta-like"/>
    <property type="match status" value="1"/>
</dbReference>
<dbReference type="FunFam" id="1.10.490.10:FF:000001">
    <property type="entry name" value="Hemoglobin subunit beta"/>
    <property type="match status" value="1"/>
</dbReference>
<dbReference type="Gene3D" id="1.10.490.10">
    <property type="entry name" value="Globins"/>
    <property type="match status" value="1"/>
</dbReference>
<dbReference type="InterPro" id="IPR000971">
    <property type="entry name" value="Globin"/>
</dbReference>
<dbReference type="InterPro" id="IPR009050">
    <property type="entry name" value="Globin-like_sf"/>
</dbReference>
<dbReference type="InterPro" id="IPR012292">
    <property type="entry name" value="Globin/Proto"/>
</dbReference>
<dbReference type="InterPro" id="IPR002337">
    <property type="entry name" value="Hemoglobin_b"/>
</dbReference>
<dbReference type="InterPro" id="IPR050056">
    <property type="entry name" value="Hemoglobin_oxygen_transport"/>
</dbReference>
<dbReference type="PANTHER" id="PTHR11442">
    <property type="entry name" value="HEMOGLOBIN FAMILY MEMBER"/>
    <property type="match status" value="1"/>
</dbReference>
<dbReference type="PANTHER" id="PTHR11442:SF42">
    <property type="entry name" value="HEMOGLOBIN SUBUNIT BETA"/>
    <property type="match status" value="1"/>
</dbReference>
<dbReference type="Pfam" id="PF00042">
    <property type="entry name" value="Globin"/>
    <property type="match status" value="1"/>
</dbReference>
<dbReference type="PRINTS" id="PR00814">
    <property type="entry name" value="BETAHAEM"/>
</dbReference>
<dbReference type="SUPFAM" id="SSF46458">
    <property type="entry name" value="Globin-like"/>
    <property type="match status" value="1"/>
</dbReference>
<dbReference type="PROSITE" id="PS01033">
    <property type="entry name" value="GLOBIN"/>
    <property type="match status" value="1"/>
</dbReference>
<reference key="1">
    <citation type="journal article" date="1989" name="Biol. Chem. Hoppe-Seyler">
        <title>Carnivora: the amino-acid sequence of the adult Sumatran tiger (Panthera tigris sumatrae) hemoglobins.</title>
        <authorList>
            <person name="Jahan M.J."/>
            <person name="Ahmed A."/>
            <person name="Braunitzer G."/>
            <person name="Goltenboth R."/>
        </authorList>
    </citation>
    <scope>PROTEIN SEQUENCE OF 2-147</scope>
    <scope>ACETYLATION AT SER-2</scope>
</reference>
<sequence length="147" mass="16117">MSFLSAEEKGLVNGLWSKVNVDEVGGEALGRLLVVYPWTQRFFQSFGDLSSADAIMSNAKVKAHGKKVLNSFSDGLKNIDDLKGAFAKLSELHCDKLHVDPENFRLLGNVLVCVLAHHFGHEFNPQVQAAFQKVVAGVASALAHRYH</sequence>
<comment type="function">
    <text>Involved in oxygen transport from the lung to the various peripheral tissues.</text>
</comment>
<comment type="subunit">
    <text>Heterotetramer of two alpha chains and two beta chains.</text>
</comment>
<comment type="tissue specificity">
    <text>Red blood cells.</text>
</comment>
<comment type="miscellaneous">
    <text>In the cat family (felidae), the oxygen affinity of hemoglobin depends little or not at all on the association with diphosphoglycerate (DPG).</text>
</comment>
<comment type="similarity">
    <text evidence="4">Belongs to the globin family.</text>
</comment>
<accession>P68048</accession>
<accession>P10884</accession>